<proteinExistence type="inferred from homology"/>
<name>UTP5_SCHPO</name>
<evidence type="ECO:0000250" key="1"/>
<evidence type="ECO:0000256" key="2">
    <source>
        <dbReference type="SAM" id="MobiDB-lite"/>
    </source>
</evidence>
<evidence type="ECO:0000269" key="3">
    <source>
    </source>
</evidence>
<evidence type="ECO:0000305" key="4"/>
<keyword id="KW-0539">Nucleus</keyword>
<keyword id="KW-1185">Reference proteome</keyword>
<keyword id="KW-0677">Repeat</keyword>
<keyword id="KW-0687">Ribonucleoprotein</keyword>
<keyword id="KW-0690">Ribosome biogenesis</keyword>
<keyword id="KW-0698">rRNA processing</keyword>
<keyword id="KW-0804">Transcription</keyword>
<keyword id="KW-0853">WD repeat</keyword>
<sequence length="666" mass="73697">MAVRSRPQLAFQTEKENGIGITAFNETAKLYANVVEALDAQRLRIFDSVAGSLKTEYILEKEKVISCIAWEQKPLYASEQITTDISGSGEILVLGTNSGEILIYSEHLGSLTRTYSFGILQKIIGAHVLANDGFAIDITGKVVCFSVNTGEVRTSFTVPSSSREFSGLYLSTVFKNLALASSHNIHIVDLNHRNPIDSLTTHTSMINSVVFQYLKDENKFYFGVSANQDRFINLYSKELDGTGEFPTNTVKNVGALVCENEVKMLSIAYEIENPETGVLAALTNDGTIEMFENPWLSKLRQNGTNASSLSHRRKLLTSHSTLKICFCRSRGDPPIVLESIAFESTDSLTVVWKESTRTVFETVPWRILSSQATNGLIELVRSKTRLTSKNKTVSNVYDESNATISSGVMQKDLRKTEEIGSAEAMEGEEQEPSLAERLQNLTKLDQQAQALSTQISASTSLSTVLTQALKTNDQSLLESCFNNNNVETIDTTIRRLDPSLAPILLDKLAEKLALRPMRADVLMVWIRCTLITHGGHLVLVDDLKHKLANLHSILEDRASKYSSMLALQGKLDLVLSQIAFRKAGGSKDNAEDEEPISIYYEGYEESMDEASSTGDEGYSSDDSVDNEMYSDEENSSKGAFPDEENENRELSEDYSGDESLENSESE</sequence>
<reference key="1">
    <citation type="journal article" date="2002" name="Nature">
        <title>The genome sequence of Schizosaccharomyces pombe.</title>
        <authorList>
            <person name="Wood V."/>
            <person name="Gwilliam R."/>
            <person name="Rajandream M.A."/>
            <person name="Lyne M.H."/>
            <person name="Lyne R."/>
            <person name="Stewart A."/>
            <person name="Sgouros J.G."/>
            <person name="Peat N."/>
            <person name="Hayles J."/>
            <person name="Baker S.G."/>
            <person name="Basham D."/>
            <person name="Bowman S."/>
            <person name="Brooks K."/>
            <person name="Brown D."/>
            <person name="Brown S."/>
            <person name="Chillingworth T."/>
            <person name="Churcher C.M."/>
            <person name="Collins M."/>
            <person name="Connor R."/>
            <person name="Cronin A."/>
            <person name="Davis P."/>
            <person name="Feltwell T."/>
            <person name="Fraser A."/>
            <person name="Gentles S."/>
            <person name="Goble A."/>
            <person name="Hamlin N."/>
            <person name="Harris D.E."/>
            <person name="Hidalgo J."/>
            <person name="Hodgson G."/>
            <person name="Holroyd S."/>
            <person name="Hornsby T."/>
            <person name="Howarth S."/>
            <person name="Huckle E.J."/>
            <person name="Hunt S."/>
            <person name="Jagels K."/>
            <person name="James K.D."/>
            <person name="Jones L."/>
            <person name="Jones M."/>
            <person name="Leather S."/>
            <person name="McDonald S."/>
            <person name="McLean J."/>
            <person name="Mooney P."/>
            <person name="Moule S."/>
            <person name="Mungall K.L."/>
            <person name="Murphy L.D."/>
            <person name="Niblett D."/>
            <person name="Odell C."/>
            <person name="Oliver K."/>
            <person name="O'Neil S."/>
            <person name="Pearson D."/>
            <person name="Quail M.A."/>
            <person name="Rabbinowitsch E."/>
            <person name="Rutherford K.M."/>
            <person name="Rutter S."/>
            <person name="Saunders D."/>
            <person name="Seeger K."/>
            <person name="Sharp S."/>
            <person name="Skelton J."/>
            <person name="Simmonds M.N."/>
            <person name="Squares R."/>
            <person name="Squares S."/>
            <person name="Stevens K."/>
            <person name="Taylor K."/>
            <person name="Taylor R.G."/>
            <person name="Tivey A."/>
            <person name="Walsh S.V."/>
            <person name="Warren T."/>
            <person name="Whitehead S."/>
            <person name="Woodward J.R."/>
            <person name="Volckaert G."/>
            <person name="Aert R."/>
            <person name="Robben J."/>
            <person name="Grymonprez B."/>
            <person name="Weltjens I."/>
            <person name="Vanstreels E."/>
            <person name="Rieger M."/>
            <person name="Schaefer M."/>
            <person name="Mueller-Auer S."/>
            <person name="Gabel C."/>
            <person name="Fuchs M."/>
            <person name="Duesterhoeft A."/>
            <person name="Fritzc C."/>
            <person name="Holzer E."/>
            <person name="Moestl D."/>
            <person name="Hilbert H."/>
            <person name="Borzym K."/>
            <person name="Langer I."/>
            <person name="Beck A."/>
            <person name="Lehrach H."/>
            <person name="Reinhardt R."/>
            <person name="Pohl T.M."/>
            <person name="Eger P."/>
            <person name="Zimmermann W."/>
            <person name="Wedler H."/>
            <person name="Wambutt R."/>
            <person name="Purnelle B."/>
            <person name="Goffeau A."/>
            <person name="Cadieu E."/>
            <person name="Dreano S."/>
            <person name="Gloux S."/>
            <person name="Lelaure V."/>
            <person name="Mottier S."/>
            <person name="Galibert F."/>
            <person name="Aves S.J."/>
            <person name="Xiang Z."/>
            <person name="Hunt C."/>
            <person name="Moore K."/>
            <person name="Hurst S.M."/>
            <person name="Lucas M."/>
            <person name="Rochet M."/>
            <person name="Gaillardin C."/>
            <person name="Tallada V.A."/>
            <person name="Garzon A."/>
            <person name="Thode G."/>
            <person name="Daga R.R."/>
            <person name="Cruzado L."/>
            <person name="Jimenez J."/>
            <person name="Sanchez M."/>
            <person name="del Rey F."/>
            <person name="Benito J."/>
            <person name="Dominguez A."/>
            <person name="Revuelta J.L."/>
            <person name="Moreno S."/>
            <person name="Armstrong J."/>
            <person name="Forsburg S.L."/>
            <person name="Cerutti L."/>
            <person name="Lowe T."/>
            <person name="McCombie W.R."/>
            <person name="Paulsen I."/>
            <person name="Potashkin J."/>
            <person name="Shpakovski G.V."/>
            <person name="Ussery D."/>
            <person name="Barrell B.G."/>
            <person name="Nurse P."/>
        </authorList>
    </citation>
    <scope>NUCLEOTIDE SEQUENCE [LARGE SCALE GENOMIC DNA]</scope>
    <source>
        <strain>972 / ATCC 24843</strain>
    </source>
</reference>
<reference key="2">
    <citation type="journal article" date="2006" name="Nat. Biotechnol.">
        <title>ORFeome cloning and global analysis of protein localization in the fission yeast Schizosaccharomyces pombe.</title>
        <authorList>
            <person name="Matsuyama A."/>
            <person name="Arai R."/>
            <person name="Yashiroda Y."/>
            <person name="Shirai A."/>
            <person name="Kamata A."/>
            <person name="Sekido S."/>
            <person name="Kobayashi Y."/>
            <person name="Hashimoto A."/>
            <person name="Hamamoto M."/>
            <person name="Hiraoka Y."/>
            <person name="Horinouchi S."/>
            <person name="Yoshida M."/>
        </authorList>
    </citation>
    <scope>SUBCELLULAR LOCATION [LARGE SCALE ANALYSIS]</scope>
</reference>
<protein>
    <recommendedName>
        <fullName>U3 small nucleolar RNA-associated protein 5</fullName>
        <shortName>U3 snoRNA-associated protein 5</shortName>
    </recommendedName>
    <alternativeName>
        <fullName>U3 protein 5 required for transcription</fullName>
    </alternativeName>
</protein>
<feature type="chain" id="PRO_0000116824" description="U3 small nucleolar RNA-associated protein 5">
    <location>
        <begin position="1"/>
        <end position="666"/>
    </location>
</feature>
<feature type="repeat" description="WD 1">
    <location>
        <begin position="14"/>
        <end position="56"/>
    </location>
</feature>
<feature type="repeat" description="WD 2">
    <location>
        <begin position="60"/>
        <end position="114"/>
    </location>
</feature>
<feature type="repeat" description="WD 3">
    <location>
        <begin position="201"/>
        <end position="246"/>
    </location>
</feature>
<feature type="repeat" description="WD 4">
    <location>
        <begin position="259"/>
        <end position="301"/>
    </location>
</feature>
<feature type="repeat" description="WD 5">
    <location>
        <begin position="316"/>
        <end position="362"/>
    </location>
</feature>
<feature type="repeat" description="WD 6">
    <location>
        <begin position="495"/>
        <end position="535"/>
    </location>
</feature>
<feature type="repeat" description="WD 7">
    <location>
        <begin position="570"/>
        <end position="609"/>
    </location>
</feature>
<feature type="region of interest" description="Disordered" evidence="2">
    <location>
        <begin position="603"/>
        <end position="666"/>
    </location>
</feature>
<feature type="compositionally biased region" description="Acidic residues" evidence="2">
    <location>
        <begin position="618"/>
        <end position="633"/>
    </location>
</feature>
<feature type="compositionally biased region" description="Acidic residues" evidence="2">
    <location>
        <begin position="641"/>
        <end position="666"/>
    </location>
</feature>
<comment type="function">
    <text evidence="1">Involved in nucleolar processing of pre-18S ribosomal RNA. Required for optimal pre-ribosomal RNA transcription by RNA polymerase I together with a subset of U3 proteins required for transcription (t-UTPs) (By similarity).</text>
</comment>
<comment type="subunit">
    <text evidence="1">Component of the ribosomal small subunit (SSU) processome.</text>
</comment>
<comment type="subcellular location">
    <subcellularLocation>
        <location evidence="3">Nucleus</location>
        <location evidence="3">Nucleolus</location>
    </subcellularLocation>
</comment>
<comment type="similarity">
    <text evidence="4">Belongs to the UTP5 family.</text>
</comment>
<accession>Q9HE11</accession>
<accession>Q9HGP3</accession>
<gene>
    <name type="primary">utp5</name>
    <name type="ORF">SPAC20H4.01</name>
    <name type="ORF">SPAC631.03</name>
</gene>
<organism>
    <name type="scientific">Schizosaccharomyces pombe (strain 972 / ATCC 24843)</name>
    <name type="common">Fission yeast</name>
    <dbReference type="NCBI Taxonomy" id="284812"/>
    <lineage>
        <taxon>Eukaryota</taxon>
        <taxon>Fungi</taxon>
        <taxon>Dikarya</taxon>
        <taxon>Ascomycota</taxon>
        <taxon>Taphrinomycotina</taxon>
        <taxon>Schizosaccharomycetes</taxon>
        <taxon>Schizosaccharomycetales</taxon>
        <taxon>Schizosaccharomycetaceae</taxon>
        <taxon>Schizosaccharomyces</taxon>
    </lineage>
</organism>
<dbReference type="EMBL" id="CU329670">
    <property type="protein sequence ID" value="CAC05485.2"/>
    <property type="molecule type" value="Genomic_DNA"/>
</dbReference>
<dbReference type="RefSeq" id="NP_593621.2">
    <property type="nucleotide sequence ID" value="NM_001019052.3"/>
</dbReference>
<dbReference type="SMR" id="Q9HE11"/>
<dbReference type="BioGRID" id="279810">
    <property type="interactions" value="2"/>
</dbReference>
<dbReference type="FunCoup" id="Q9HE11">
    <property type="interactions" value="620"/>
</dbReference>
<dbReference type="STRING" id="284812.Q9HE11"/>
<dbReference type="iPTMnet" id="Q9HE11"/>
<dbReference type="PaxDb" id="4896-SPAC20H4.01.1"/>
<dbReference type="EnsemblFungi" id="SPAC20H4.01.1">
    <property type="protein sequence ID" value="SPAC20H4.01.1:pep"/>
    <property type="gene ID" value="SPAC20H4.01"/>
</dbReference>
<dbReference type="GeneID" id="2543388"/>
<dbReference type="KEGG" id="spo:2543388"/>
<dbReference type="PomBase" id="SPAC20H4.01">
    <property type="gene designation" value="utp5"/>
</dbReference>
<dbReference type="VEuPathDB" id="FungiDB:SPAC20H4.01"/>
<dbReference type="eggNOG" id="KOG4547">
    <property type="taxonomic scope" value="Eukaryota"/>
</dbReference>
<dbReference type="HOGENOM" id="CLU_023936_0_0_1"/>
<dbReference type="InParanoid" id="Q9HE11"/>
<dbReference type="OMA" id="WVKWCLI"/>
<dbReference type="PhylomeDB" id="Q9HE11"/>
<dbReference type="Reactome" id="R-SPO-6791226">
    <property type="pathway name" value="Major pathway of rRNA processing in the nucleolus and cytosol"/>
</dbReference>
<dbReference type="PRO" id="PR:Q9HE11"/>
<dbReference type="Proteomes" id="UP000002485">
    <property type="component" value="Chromosome I"/>
</dbReference>
<dbReference type="GO" id="GO:0005829">
    <property type="term" value="C:cytosol"/>
    <property type="evidence" value="ECO:0007005"/>
    <property type="project" value="PomBase"/>
</dbReference>
<dbReference type="GO" id="GO:0005730">
    <property type="term" value="C:nucleolus"/>
    <property type="evidence" value="ECO:0000318"/>
    <property type="project" value="GO_Central"/>
</dbReference>
<dbReference type="GO" id="GO:0005634">
    <property type="term" value="C:nucleus"/>
    <property type="evidence" value="ECO:0007005"/>
    <property type="project" value="PomBase"/>
</dbReference>
<dbReference type="GO" id="GO:0032040">
    <property type="term" value="C:small-subunit processome"/>
    <property type="evidence" value="ECO:0000266"/>
    <property type="project" value="PomBase"/>
</dbReference>
<dbReference type="GO" id="GO:0034455">
    <property type="term" value="C:t-UTP complex"/>
    <property type="evidence" value="ECO:0000266"/>
    <property type="project" value="PomBase"/>
</dbReference>
<dbReference type="GO" id="GO:0030515">
    <property type="term" value="F:snoRNA binding"/>
    <property type="evidence" value="ECO:0000266"/>
    <property type="project" value="PomBase"/>
</dbReference>
<dbReference type="GO" id="GO:0000462">
    <property type="term" value="P:maturation of SSU-rRNA from tricistronic rRNA transcript (SSU-rRNA, 5.8S rRNA, LSU-rRNA)"/>
    <property type="evidence" value="ECO:0000318"/>
    <property type="project" value="GO_Central"/>
</dbReference>
<dbReference type="Gene3D" id="2.130.10.10">
    <property type="entry name" value="YVTN repeat-like/Quinoprotein amine dehydrogenase"/>
    <property type="match status" value="1"/>
</dbReference>
<dbReference type="InterPro" id="IPR007148">
    <property type="entry name" value="SSU_processome_Utp12"/>
</dbReference>
<dbReference type="InterPro" id="IPR052414">
    <property type="entry name" value="U3_snoRNA-assoc_WDR"/>
</dbReference>
<dbReference type="InterPro" id="IPR015943">
    <property type="entry name" value="WD40/YVTN_repeat-like_dom_sf"/>
</dbReference>
<dbReference type="InterPro" id="IPR036322">
    <property type="entry name" value="WD40_repeat_dom_sf"/>
</dbReference>
<dbReference type="PANTHER" id="PTHR44267">
    <property type="entry name" value="WD REPEAT-CONTAINING PROTEIN 43"/>
    <property type="match status" value="1"/>
</dbReference>
<dbReference type="PANTHER" id="PTHR44267:SF1">
    <property type="entry name" value="WD REPEAT-CONTAINING PROTEIN 43"/>
    <property type="match status" value="1"/>
</dbReference>
<dbReference type="Pfam" id="PF04003">
    <property type="entry name" value="Utp12"/>
    <property type="match status" value="1"/>
</dbReference>
<dbReference type="SUPFAM" id="SSF50978">
    <property type="entry name" value="WD40 repeat-like"/>
    <property type="match status" value="1"/>
</dbReference>